<name>RM23_DROME</name>
<proteinExistence type="evidence at transcript level"/>
<protein>
    <recommendedName>
        <fullName evidence="2">Large ribosomal subunit protein uL23m</fullName>
    </recommendedName>
    <alternativeName>
        <fullName>39S ribosomal protein L23, mitochondrial</fullName>
        <shortName>L23mt</shortName>
        <shortName>MRP-L23</shortName>
    </alternativeName>
</protein>
<dbReference type="EMBL" id="AE014296">
    <property type="protein sequence ID" value="AAF47639.1"/>
    <property type="molecule type" value="Genomic_DNA"/>
</dbReference>
<dbReference type="EMBL" id="AE014296">
    <property type="protein sequence ID" value="ACL83229.1"/>
    <property type="molecule type" value="Genomic_DNA"/>
</dbReference>
<dbReference type="EMBL" id="AY071415">
    <property type="protein sequence ID" value="AAL49037.1"/>
    <property type="molecule type" value="mRNA"/>
</dbReference>
<dbReference type="RefSeq" id="NP_001137873.1">
    <property type="nucleotide sequence ID" value="NM_001144401.2"/>
</dbReference>
<dbReference type="RefSeq" id="NP_001261325.1">
    <property type="nucleotide sequence ID" value="NM_001274396.1"/>
</dbReference>
<dbReference type="RefSeq" id="NP_001261326.1">
    <property type="nucleotide sequence ID" value="NM_001274397.1"/>
</dbReference>
<dbReference type="RefSeq" id="NP_523889.1">
    <property type="nucleotide sequence ID" value="NM_079165.5"/>
</dbReference>
<dbReference type="SMR" id="Q9W021"/>
<dbReference type="BioGRID" id="63817">
    <property type="interactions" value="10"/>
</dbReference>
<dbReference type="FunCoup" id="Q9W021">
    <property type="interactions" value="198"/>
</dbReference>
<dbReference type="IntAct" id="Q9W021">
    <property type="interactions" value="15"/>
</dbReference>
<dbReference type="STRING" id="7227.FBpp0288404"/>
<dbReference type="PaxDb" id="7227-FBpp0303832"/>
<dbReference type="DNASU" id="38302"/>
<dbReference type="EnsemblMetazoa" id="FBtr0072900">
    <property type="protein sequence ID" value="FBpp0072778"/>
    <property type="gene ID" value="FBgn0035335"/>
</dbReference>
<dbReference type="EnsemblMetazoa" id="FBtr0289966">
    <property type="protein sequence ID" value="FBpp0288404"/>
    <property type="gene ID" value="FBgn0035335"/>
</dbReference>
<dbReference type="EnsemblMetazoa" id="FBtr0331415">
    <property type="protein sequence ID" value="FBpp0303832"/>
    <property type="gene ID" value="FBgn0035335"/>
</dbReference>
<dbReference type="EnsemblMetazoa" id="FBtr0331416">
    <property type="protein sequence ID" value="FBpp0303833"/>
    <property type="gene ID" value="FBgn0035335"/>
</dbReference>
<dbReference type="GeneID" id="38302"/>
<dbReference type="KEGG" id="dme:Dmel_CG1320"/>
<dbReference type="AGR" id="FB:FBgn0035335"/>
<dbReference type="CTD" id="6150"/>
<dbReference type="FlyBase" id="FBgn0035335">
    <property type="gene designation" value="mRpL23"/>
</dbReference>
<dbReference type="VEuPathDB" id="VectorBase:FBgn0035335"/>
<dbReference type="eggNOG" id="KOG4089">
    <property type="taxonomic scope" value="Eukaryota"/>
</dbReference>
<dbReference type="GeneTree" id="ENSGT00390000007739"/>
<dbReference type="HOGENOM" id="CLU_103097_1_1_1"/>
<dbReference type="InParanoid" id="Q9W021"/>
<dbReference type="OMA" id="PNFWLKL"/>
<dbReference type="OrthoDB" id="275582at2759"/>
<dbReference type="PhylomeDB" id="Q9W021"/>
<dbReference type="Reactome" id="R-DME-5389840">
    <property type="pathway name" value="Mitochondrial translation elongation"/>
</dbReference>
<dbReference type="Reactome" id="R-DME-5419276">
    <property type="pathway name" value="Mitochondrial translation termination"/>
</dbReference>
<dbReference type="SignaLink" id="Q9W021"/>
<dbReference type="BioGRID-ORCS" id="38302">
    <property type="hits" value="0 hits in 3 CRISPR screens"/>
</dbReference>
<dbReference type="GenomeRNAi" id="38302"/>
<dbReference type="PRO" id="PR:Q9W021"/>
<dbReference type="Proteomes" id="UP000000803">
    <property type="component" value="Chromosome 3L"/>
</dbReference>
<dbReference type="Bgee" id="FBgn0035335">
    <property type="expression patterns" value="Expressed in lamina wide-field cell Lawf2 (Drosophila) in brain and 146 other cell types or tissues"/>
</dbReference>
<dbReference type="ExpressionAtlas" id="Q9W021">
    <property type="expression patterns" value="baseline and differential"/>
</dbReference>
<dbReference type="GO" id="GO:0005762">
    <property type="term" value="C:mitochondrial large ribosomal subunit"/>
    <property type="evidence" value="ECO:0000250"/>
    <property type="project" value="UniProtKB"/>
</dbReference>
<dbReference type="GO" id="GO:0003735">
    <property type="term" value="F:structural constituent of ribosome"/>
    <property type="evidence" value="ECO:0000318"/>
    <property type="project" value="GO_Central"/>
</dbReference>
<dbReference type="GO" id="GO:0032543">
    <property type="term" value="P:mitochondrial translation"/>
    <property type="evidence" value="ECO:0000318"/>
    <property type="project" value="GO_Central"/>
</dbReference>
<dbReference type="FunFam" id="3.30.70.330:FF:000284">
    <property type="entry name" value="39S ribosomal protein L23, mitochondrial"/>
    <property type="match status" value="1"/>
</dbReference>
<dbReference type="Gene3D" id="3.30.70.330">
    <property type="match status" value="1"/>
</dbReference>
<dbReference type="InterPro" id="IPR012677">
    <property type="entry name" value="Nucleotide-bd_a/b_plait_sf"/>
</dbReference>
<dbReference type="InterPro" id="IPR013025">
    <property type="entry name" value="Ribosomal_uL23-like"/>
</dbReference>
<dbReference type="InterPro" id="IPR012678">
    <property type="entry name" value="Ribosomal_uL23/eL15/eS24_sf"/>
</dbReference>
<dbReference type="PANTHER" id="PTHR12059:SF5">
    <property type="entry name" value="LARGE RIBOSOMAL SUBUNIT PROTEIN UL23M"/>
    <property type="match status" value="1"/>
</dbReference>
<dbReference type="PANTHER" id="PTHR12059">
    <property type="entry name" value="RIBOSOMAL PROTEIN L23-RELATED"/>
    <property type="match status" value="1"/>
</dbReference>
<dbReference type="Pfam" id="PF00276">
    <property type="entry name" value="Ribosomal_L23"/>
    <property type="match status" value="1"/>
</dbReference>
<dbReference type="SUPFAM" id="SSF54189">
    <property type="entry name" value="Ribosomal proteins S24e, L23 and L15e"/>
    <property type="match status" value="1"/>
</dbReference>
<keyword id="KW-0496">Mitochondrion</keyword>
<keyword id="KW-1185">Reference proteome</keyword>
<keyword id="KW-0687">Ribonucleoprotein</keyword>
<keyword id="KW-0689">Ribosomal protein</keyword>
<accession>Q9W021</accession>
<accession>B7Z0I3</accession>
<evidence type="ECO:0000250" key="1">
    <source>
        <dbReference type="UniProtKB" id="Q16540"/>
    </source>
</evidence>
<evidence type="ECO:0000305" key="2"/>
<comment type="subunit">
    <text evidence="1">Component of the mitochondrial ribosome large subunit (39S) which comprises a 16S rRNA and about 50 distinct proteins.</text>
</comment>
<comment type="subcellular location">
    <subcellularLocation>
        <location evidence="1">Mitochondrion</location>
    </subcellularLocation>
</comment>
<comment type="similarity">
    <text evidence="2">Belongs to the universal ribosomal protein uL23 family.</text>
</comment>
<organism>
    <name type="scientific">Drosophila melanogaster</name>
    <name type="common">Fruit fly</name>
    <dbReference type="NCBI Taxonomy" id="7227"/>
    <lineage>
        <taxon>Eukaryota</taxon>
        <taxon>Metazoa</taxon>
        <taxon>Ecdysozoa</taxon>
        <taxon>Arthropoda</taxon>
        <taxon>Hexapoda</taxon>
        <taxon>Insecta</taxon>
        <taxon>Pterygota</taxon>
        <taxon>Neoptera</taxon>
        <taxon>Endopterygota</taxon>
        <taxon>Diptera</taxon>
        <taxon>Brachycera</taxon>
        <taxon>Muscomorpha</taxon>
        <taxon>Ephydroidea</taxon>
        <taxon>Drosophilidae</taxon>
        <taxon>Drosophila</taxon>
        <taxon>Sophophora</taxon>
    </lineage>
</organism>
<sequence>MSTRWYPIYQRGNPQLRVFLPNFWMKLIRPTEEQPPNVVTFSVSMEMTKYDVRNYLEKIYKLPVVDVRTRIAMGETKKDQTYGYITKKDDVKLAYVTLPREESFVFPDFFSEKAEKQAKEEKSLDESKAGFRRFLDRNKKRPGTPGWFSI</sequence>
<reference key="1">
    <citation type="journal article" date="2000" name="Science">
        <title>The genome sequence of Drosophila melanogaster.</title>
        <authorList>
            <person name="Adams M.D."/>
            <person name="Celniker S.E."/>
            <person name="Holt R.A."/>
            <person name="Evans C.A."/>
            <person name="Gocayne J.D."/>
            <person name="Amanatides P.G."/>
            <person name="Scherer S.E."/>
            <person name="Li P.W."/>
            <person name="Hoskins R.A."/>
            <person name="Galle R.F."/>
            <person name="George R.A."/>
            <person name="Lewis S.E."/>
            <person name="Richards S."/>
            <person name="Ashburner M."/>
            <person name="Henderson S.N."/>
            <person name="Sutton G.G."/>
            <person name="Wortman J.R."/>
            <person name="Yandell M.D."/>
            <person name="Zhang Q."/>
            <person name="Chen L.X."/>
            <person name="Brandon R.C."/>
            <person name="Rogers Y.-H.C."/>
            <person name="Blazej R.G."/>
            <person name="Champe M."/>
            <person name="Pfeiffer B.D."/>
            <person name="Wan K.H."/>
            <person name="Doyle C."/>
            <person name="Baxter E.G."/>
            <person name="Helt G."/>
            <person name="Nelson C.R."/>
            <person name="Miklos G.L.G."/>
            <person name="Abril J.F."/>
            <person name="Agbayani A."/>
            <person name="An H.-J."/>
            <person name="Andrews-Pfannkoch C."/>
            <person name="Baldwin D."/>
            <person name="Ballew R.M."/>
            <person name="Basu A."/>
            <person name="Baxendale J."/>
            <person name="Bayraktaroglu L."/>
            <person name="Beasley E.M."/>
            <person name="Beeson K.Y."/>
            <person name="Benos P.V."/>
            <person name="Berman B.P."/>
            <person name="Bhandari D."/>
            <person name="Bolshakov S."/>
            <person name="Borkova D."/>
            <person name="Botchan M.R."/>
            <person name="Bouck J."/>
            <person name="Brokstein P."/>
            <person name="Brottier P."/>
            <person name="Burtis K.C."/>
            <person name="Busam D.A."/>
            <person name="Butler H."/>
            <person name="Cadieu E."/>
            <person name="Center A."/>
            <person name="Chandra I."/>
            <person name="Cherry J.M."/>
            <person name="Cawley S."/>
            <person name="Dahlke C."/>
            <person name="Davenport L.B."/>
            <person name="Davies P."/>
            <person name="de Pablos B."/>
            <person name="Delcher A."/>
            <person name="Deng Z."/>
            <person name="Mays A.D."/>
            <person name="Dew I."/>
            <person name="Dietz S.M."/>
            <person name="Dodson K."/>
            <person name="Doup L.E."/>
            <person name="Downes M."/>
            <person name="Dugan-Rocha S."/>
            <person name="Dunkov B.C."/>
            <person name="Dunn P."/>
            <person name="Durbin K.J."/>
            <person name="Evangelista C.C."/>
            <person name="Ferraz C."/>
            <person name="Ferriera S."/>
            <person name="Fleischmann W."/>
            <person name="Fosler C."/>
            <person name="Gabrielian A.E."/>
            <person name="Garg N.S."/>
            <person name="Gelbart W.M."/>
            <person name="Glasser K."/>
            <person name="Glodek A."/>
            <person name="Gong F."/>
            <person name="Gorrell J.H."/>
            <person name="Gu Z."/>
            <person name="Guan P."/>
            <person name="Harris M."/>
            <person name="Harris N.L."/>
            <person name="Harvey D.A."/>
            <person name="Heiman T.J."/>
            <person name="Hernandez J.R."/>
            <person name="Houck J."/>
            <person name="Hostin D."/>
            <person name="Houston K.A."/>
            <person name="Howland T.J."/>
            <person name="Wei M.-H."/>
            <person name="Ibegwam C."/>
            <person name="Jalali M."/>
            <person name="Kalush F."/>
            <person name="Karpen G.H."/>
            <person name="Ke Z."/>
            <person name="Kennison J.A."/>
            <person name="Ketchum K.A."/>
            <person name="Kimmel B.E."/>
            <person name="Kodira C.D."/>
            <person name="Kraft C.L."/>
            <person name="Kravitz S."/>
            <person name="Kulp D."/>
            <person name="Lai Z."/>
            <person name="Lasko P."/>
            <person name="Lei Y."/>
            <person name="Levitsky A.A."/>
            <person name="Li J.H."/>
            <person name="Li Z."/>
            <person name="Liang Y."/>
            <person name="Lin X."/>
            <person name="Liu X."/>
            <person name="Mattei B."/>
            <person name="McIntosh T.C."/>
            <person name="McLeod M.P."/>
            <person name="McPherson D."/>
            <person name="Merkulov G."/>
            <person name="Milshina N.V."/>
            <person name="Mobarry C."/>
            <person name="Morris J."/>
            <person name="Moshrefi A."/>
            <person name="Mount S.M."/>
            <person name="Moy M."/>
            <person name="Murphy B."/>
            <person name="Murphy L."/>
            <person name="Muzny D.M."/>
            <person name="Nelson D.L."/>
            <person name="Nelson D.R."/>
            <person name="Nelson K.A."/>
            <person name="Nixon K."/>
            <person name="Nusskern D.R."/>
            <person name="Pacleb J.M."/>
            <person name="Palazzolo M."/>
            <person name="Pittman G.S."/>
            <person name="Pan S."/>
            <person name="Pollard J."/>
            <person name="Puri V."/>
            <person name="Reese M.G."/>
            <person name="Reinert K."/>
            <person name="Remington K."/>
            <person name="Saunders R.D.C."/>
            <person name="Scheeler F."/>
            <person name="Shen H."/>
            <person name="Shue B.C."/>
            <person name="Siden-Kiamos I."/>
            <person name="Simpson M."/>
            <person name="Skupski M.P."/>
            <person name="Smith T.J."/>
            <person name="Spier E."/>
            <person name="Spradling A.C."/>
            <person name="Stapleton M."/>
            <person name="Strong R."/>
            <person name="Sun E."/>
            <person name="Svirskas R."/>
            <person name="Tector C."/>
            <person name="Turner R."/>
            <person name="Venter E."/>
            <person name="Wang A.H."/>
            <person name="Wang X."/>
            <person name="Wang Z.-Y."/>
            <person name="Wassarman D.A."/>
            <person name="Weinstock G.M."/>
            <person name="Weissenbach J."/>
            <person name="Williams S.M."/>
            <person name="Woodage T."/>
            <person name="Worley K.C."/>
            <person name="Wu D."/>
            <person name="Yang S."/>
            <person name="Yao Q.A."/>
            <person name="Ye J."/>
            <person name="Yeh R.-F."/>
            <person name="Zaveri J.S."/>
            <person name="Zhan M."/>
            <person name="Zhang G."/>
            <person name="Zhao Q."/>
            <person name="Zheng L."/>
            <person name="Zheng X.H."/>
            <person name="Zhong F.N."/>
            <person name="Zhong W."/>
            <person name="Zhou X."/>
            <person name="Zhu S.C."/>
            <person name="Zhu X."/>
            <person name="Smith H.O."/>
            <person name="Gibbs R.A."/>
            <person name="Myers E.W."/>
            <person name="Rubin G.M."/>
            <person name="Venter J.C."/>
        </authorList>
    </citation>
    <scope>NUCLEOTIDE SEQUENCE [LARGE SCALE GENOMIC DNA]</scope>
    <source>
        <strain>Berkeley</strain>
    </source>
</reference>
<reference key="2">
    <citation type="journal article" date="2002" name="Genome Biol.">
        <title>Annotation of the Drosophila melanogaster euchromatic genome: a systematic review.</title>
        <authorList>
            <person name="Misra S."/>
            <person name="Crosby M.A."/>
            <person name="Mungall C.J."/>
            <person name="Matthews B.B."/>
            <person name="Campbell K.S."/>
            <person name="Hradecky P."/>
            <person name="Huang Y."/>
            <person name="Kaminker J.S."/>
            <person name="Millburn G.H."/>
            <person name="Prochnik S.E."/>
            <person name="Smith C.D."/>
            <person name="Tupy J.L."/>
            <person name="Whitfield E.J."/>
            <person name="Bayraktaroglu L."/>
            <person name="Berman B.P."/>
            <person name="Bettencourt B.R."/>
            <person name="Celniker S.E."/>
            <person name="de Grey A.D.N.J."/>
            <person name="Drysdale R.A."/>
            <person name="Harris N.L."/>
            <person name="Richter J."/>
            <person name="Russo S."/>
            <person name="Schroeder A.J."/>
            <person name="Shu S.Q."/>
            <person name="Stapleton M."/>
            <person name="Yamada C."/>
            <person name="Ashburner M."/>
            <person name="Gelbart W.M."/>
            <person name="Rubin G.M."/>
            <person name="Lewis S.E."/>
        </authorList>
    </citation>
    <scope>GENOME REANNOTATION</scope>
    <source>
        <strain>Berkeley</strain>
    </source>
</reference>
<reference key="3">
    <citation type="journal article" date="2002" name="Genome Biol.">
        <title>A Drosophila full-length cDNA resource.</title>
        <authorList>
            <person name="Stapleton M."/>
            <person name="Carlson J.W."/>
            <person name="Brokstein P."/>
            <person name="Yu C."/>
            <person name="Champe M."/>
            <person name="George R.A."/>
            <person name="Guarin H."/>
            <person name="Kronmiller B."/>
            <person name="Pacleb J.M."/>
            <person name="Park S."/>
            <person name="Wan K.H."/>
            <person name="Rubin G.M."/>
            <person name="Celniker S.E."/>
        </authorList>
    </citation>
    <scope>NUCLEOTIDE SEQUENCE [LARGE SCALE MRNA]</scope>
    <source>
        <strain>Berkeley</strain>
        <tissue>Embryo</tissue>
    </source>
</reference>
<feature type="chain" id="PRO_0000129491" description="Large ribosomal subunit protein uL23m">
    <location>
        <begin position="1"/>
        <end position="150"/>
    </location>
</feature>
<gene>
    <name type="primary">mRpL23</name>
    <name type="ORF">CG1320</name>
</gene>